<evidence type="ECO:0000255" key="1">
    <source>
        <dbReference type="HAMAP-Rule" id="MF_00208"/>
    </source>
</evidence>
<sequence>MNYQLHELFKAVGIHRQIVGKDLIIDSISCDSRHISKGGLFFGLPGEKVDGGIFWRKALASGAVAAVIGEEAAQKDPPSNEDMVFVVSDPVAHWMGEMASVFWKRPSSQIDLIGVTGTNGKTTTTYLIEHLCKQSGITSALFGTLYNRWPKHSEVAIHTTAFGDVLQSQLAQAVAAGARLGVMEISSHALDQRRVAGCSFSGAVFTNLTQDHLDYHESMEAYFQSKALLFQAPLLRDKESCSVVNIDDPWGLRLSKQLNKSCWRASLEKRVIDSIQPELFLTDLNITNKGIEGVLHSPFGQGPFVSSLIGRFNLMNMLEAVGILIQHGVSLQELLPSIKSFSGVPGRMEQIKVEGDLPVVLVDYAHTPDGLKNALIALRSFGSGRLFCVFGCGGDRDRSKRPLMGAIASKFADHVTLTSDNPRTEDPQQILNDVLPGIATETELIIEIDRANAIQMAIMKALPGDIVLIAGKGHENYQILGLETIEFDDREIAKKILHLKLNP</sequence>
<protein>
    <recommendedName>
        <fullName evidence="1">UDP-N-acetylmuramoyl-L-alanyl-D-glutamate--2,6-diaminopimelate ligase</fullName>
        <ecNumber evidence="1">6.3.2.13</ecNumber>
    </recommendedName>
    <alternativeName>
        <fullName evidence="1">Meso-A2pm-adding enzyme</fullName>
    </alternativeName>
    <alternativeName>
        <fullName evidence="1">Meso-diaminopimelate-adding enzyme</fullName>
    </alternativeName>
    <alternativeName>
        <fullName evidence="1">UDP-MurNAc-L-Ala-D-Glu:meso-diaminopimelate ligase</fullName>
    </alternativeName>
    <alternativeName>
        <fullName evidence="1">UDP-MurNAc-tripeptide synthetase</fullName>
    </alternativeName>
    <alternativeName>
        <fullName evidence="1">UDP-N-acetylmuramyl-tripeptide synthetase</fullName>
    </alternativeName>
</protein>
<proteinExistence type="inferred from homology"/>
<keyword id="KW-0067">ATP-binding</keyword>
<keyword id="KW-0131">Cell cycle</keyword>
<keyword id="KW-0132">Cell division</keyword>
<keyword id="KW-0133">Cell shape</keyword>
<keyword id="KW-0961">Cell wall biogenesis/degradation</keyword>
<keyword id="KW-0963">Cytoplasm</keyword>
<keyword id="KW-0436">Ligase</keyword>
<keyword id="KW-0460">Magnesium</keyword>
<keyword id="KW-0547">Nucleotide-binding</keyword>
<keyword id="KW-0573">Peptidoglycan synthesis</keyword>
<keyword id="KW-1185">Reference proteome</keyword>
<reference key="1">
    <citation type="journal article" date="2003" name="Proc. Natl. Acad. Sci. U.S.A.">
        <title>Genome sequence of the cyanobacterium Prochlorococcus marinus SS120, a nearly minimal oxyphototrophic genome.</title>
        <authorList>
            <person name="Dufresne A."/>
            <person name="Salanoubat M."/>
            <person name="Partensky F."/>
            <person name="Artiguenave F."/>
            <person name="Axmann I.M."/>
            <person name="Barbe V."/>
            <person name="Duprat S."/>
            <person name="Galperin M.Y."/>
            <person name="Koonin E.V."/>
            <person name="Le Gall F."/>
            <person name="Makarova K.S."/>
            <person name="Ostrowski M."/>
            <person name="Oztas S."/>
            <person name="Robert C."/>
            <person name="Rogozin I.B."/>
            <person name="Scanlan D.J."/>
            <person name="Tandeau de Marsac N."/>
            <person name="Weissenbach J."/>
            <person name="Wincker P."/>
            <person name="Wolf Y.I."/>
            <person name="Hess W.R."/>
        </authorList>
    </citation>
    <scope>NUCLEOTIDE SEQUENCE [LARGE SCALE GENOMIC DNA]</scope>
    <source>
        <strain>SARG / CCMP1375 / SS120</strain>
    </source>
</reference>
<name>MURE_PROMA</name>
<comment type="function">
    <text evidence="1">Catalyzes the addition of meso-diaminopimelic acid to the nucleotide precursor UDP-N-acetylmuramoyl-L-alanyl-D-glutamate (UMAG) in the biosynthesis of bacterial cell-wall peptidoglycan.</text>
</comment>
<comment type="catalytic activity">
    <reaction evidence="1">
        <text>UDP-N-acetyl-alpha-D-muramoyl-L-alanyl-D-glutamate + meso-2,6-diaminopimelate + ATP = UDP-N-acetyl-alpha-D-muramoyl-L-alanyl-gamma-D-glutamyl-meso-2,6-diaminopimelate + ADP + phosphate + H(+)</text>
        <dbReference type="Rhea" id="RHEA:23676"/>
        <dbReference type="ChEBI" id="CHEBI:15378"/>
        <dbReference type="ChEBI" id="CHEBI:30616"/>
        <dbReference type="ChEBI" id="CHEBI:43474"/>
        <dbReference type="ChEBI" id="CHEBI:57791"/>
        <dbReference type="ChEBI" id="CHEBI:83900"/>
        <dbReference type="ChEBI" id="CHEBI:83905"/>
        <dbReference type="ChEBI" id="CHEBI:456216"/>
        <dbReference type="EC" id="6.3.2.13"/>
    </reaction>
</comment>
<comment type="cofactor">
    <cofactor evidence="1">
        <name>Mg(2+)</name>
        <dbReference type="ChEBI" id="CHEBI:18420"/>
    </cofactor>
</comment>
<comment type="pathway">
    <text evidence="1">Cell wall biogenesis; peptidoglycan biosynthesis.</text>
</comment>
<comment type="subcellular location">
    <subcellularLocation>
        <location evidence="1">Cytoplasm</location>
    </subcellularLocation>
</comment>
<comment type="PTM">
    <text evidence="1">Carboxylation is probably crucial for Mg(2+) binding and, consequently, for the gamma-phosphate positioning of ATP.</text>
</comment>
<comment type="similarity">
    <text evidence="1">Belongs to the MurCDEF family. MurE subfamily.</text>
</comment>
<feature type="chain" id="PRO_0000101923" description="UDP-N-acetylmuramoyl-L-alanyl-D-glutamate--2,6-diaminopimelate ligase">
    <location>
        <begin position="1"/>
        <end position="503"/>
    </location>
</feature>
<feature type="short sequence motif" description="Meso-diaminopimelate recognition motif">
    <location>
        <begin position="420"/>
        <end position="423"/>
    </location>
</feature>
<feature type="binding site" evidence="1">
    <location>
        <position position="32"/>
    </location>
    <ligand>
        <name>UDP-N-acetyl-alpha-D-muramoyl-L-alanyl-D-glutamate</name>
        <dbReference type="ChEBI" id="CHEBI:83900"/>
    </ligand>
</feature>
<feature type="binding site" evidence="1">
    <location>
        <begin position="117"/>
        <end position="123"/>
    </location>
    <ligand>
        <name>ATP</name>
        <dbReference type="ChEBI" id="CHEBI:30616"/>
    </ligand>
</feature>
<feature type="binding site" evidence="1">
    <location>
        <begin position="159"/>
        <end position="160"/>
    </location>
    <ligand>
        <name>UDP-N-acetyl-alpha-D-muramoyl-L-alanyl-D-glutamate</name>
        <dbReference type="ChEBI" id="CHEBI:83900"/>
    </ligand>
</feature>
<feature type="binding site" evidence="1">
    <location>
        <position position="186"/>
    </location>
    <ligand>
        <name>UDP-N-acetyl-alpha-D-muramoyl-L-alanyl-D-glutamate</name>
        <dbReference type="ChEBI" id="CHEBI:83900"/>
    </ligand>
</feature>
<feature type="binding site" evidence="1">
    <location>
        <position position="192"/>
    </location>
    <ligand>
        <name>UDP-N-acetyl-alpha-D-muramoyl-L-alanyl-D-glutamate</name>
        <dbReference type="ChEBI" id="CHEBI:83900"/>
    </ligand>
</feature>
<feature type="binding site" evidence="1">
    <location>
        <position position="194"/>
    </location>
    <ligand>
        <name>UDP-N-acetyl-alpha-D-muramoyl-L-alanyl-D-glutamate</name>
        <dbReference type="ChEBI" id="CHEBI:83900"/>
    </ligand>
</feature>
<feature type="binding site" evidence="1">
    <location>
        <position position="396"/>
    </location>
    <ligand>
        <name>meso-2,6-diaminopimelate</name>
        <dbReference type="ChEBI" id="CHEBI:57791"/>
    </ligand>
</feature>
<feature type="binding site" evidence="1">
    <location>
        <begin position="420"/>
        <end position="423"/>
    </location>
    <ligand>
        <name>meso-2,6-diaminopimelate</name>
        <dbReference type="ChEBI" id="CHEBI:57791"/>
    </ligand>
</feature>
<feature type="binding site" evidence="1">
    <location>
        <position position="471"/>
    </location>
    <ligand>
        <name>meso-2,6-diaminopimelate</name>
        <dbReference type="ChEBI" id="CHEBI:57791"/>
    </ligand>
</feature>
<feature type="binding site" evidence="1">
    <location>
        <position position="475"/>
    </location>
    <ligand>
        <name>meso-2,6-diaminopimelate</name>
        <dbReference type="ChEBI" id="CHEBI:57791"/>
    </ligand>
</feature>
<feature type="modified residue" description="N6-carboxylysine" evidence="1">
    <location>
        <position position="226"/>
    </location>
</feature>
<gene>
    <name evidence="1" type="primary">murE</name>
    <name type="ordered locus">Pro_0412</name>
</gene>
<organism>
    <name type="scientific">Prochlorococcus marinus (strain SARG / CCMP1375 / SS120)</name>
    <dbReference type="NCBI Taxonomy" id="167539"/>
    <lineage>
        <taxon>Bacteria</taxon>
        <taxon>Bacillati</taxon>
        <taxon>Cyanobacteriota</taxon>
        <taxon>Cyanophyceae</taxon>
        <taxon>Synechococcales</taxon>
        <taxon>Prochlorococcaceae</taxon>
        <taxon>Prochlorococcus</taxon>
    </lineage>
</organism>
<accession>Q7VDG4</accession>
<dbReference type="EC" id="6.3.2.13" evidence="1"/>
<dbReference type="EMBL" id="AE017126">
    <property type="protein sequence ID" value="AAP99458.1"/>
    <property type="molecule type" value="Genomic_DNA"/>
</dbReference>
<dbReference type="RefSeq" id="NP_874806.1">
    <property type="nucleotide sequence ID" value="NC_005042.1"/>
</dbReference>
<dbReference type="RefSeq" id="WP_011124567.1">
    <property type="nucleotide sequence ID" value="NC_005042.1"/>
</dbReference>
<dbReference type="SMR" id="Q7VDG4"/>
<dbReference type="STRING" id="167539.Pro_0412"/>
<dbReference type="EnsemblBacteria" id="AAP99458">
    <property type="protein sequence ID" value="AAP99458"/>
    <property type="gene ID" value="Pro_0412"/>
</dbReference>
<dbReference type="KEGG" id="pma:Pro_0412"/>
<dbReference type="PATRIC" id="fig|167539.5.peg.421"/>
<dbReference type="eggNOG" id="COG0769">
    <property type="taxonomic scope" value="Bacteria"/>
</dbReference>
<dbReference type="HOGENOM" id="CLU_022291_4_1_3"/>
<dbReference type="OrthoDB" id="9800958at2"/>
<dbReference type="UniPathway" id="UPA00219"/>
<dbReference type="Proteomes" id="UP000001420">
    <property type="component" value="Chromosome"/>
</dbReference>
<dbReference type="GO" id="GO:0005737">
    <property type="term" value="C:cytoplasm"/>
    <property type="evidence" value="ECO:0007669"/>
    <property type="project" value="UniProtKB-SubCell"/>
</dbReference>
<dbReference type="GO" id="GO:0005524">
    <property type="term" value="F:ATP binding"/>
    <property type="evidence" value="ECO:0007669"/>
    <property type="project" value="UniProtKB-UniRule"/>
</dbReference>
<dbReference type="GO" id="GO:0000287">
    <property type="term" value="F:magnesium ion binding"/>
    <property type="evidence" value="ECO:0007669"/>
    <property type="project" value="UniProtKB-UniRule"/>
</dbReference>
<dbReference type="GO" id="GO:0008765">
    <property type="term" value="F:UDP-N-acetylmuramoylalanyl-D-glutamate-2,6-diaminopimelate ligase activity"/>
    <property type="evidence" value="ECO:0007669"/>
    <property type="project" value="UniProtKB-UniRule"/>
</dbReference>
<dbReference type="GO" id="GO:0051301">
    <property type="term" value="P:cell division"/>
    <property type="evidence" value="ECO:0007669"/>
    <property type="project" value="UniProtKB-KW"/>
</dbReference>
<dbReference type="GO" id="GO:0071555">
    <property type="term" value="P:cell wall organization"/>
    <property type="evidence" value="ECO:0007669"/>
    <property type="project" value="UniProtKB-KW"/>
</dbReference>
<dbReference type="GO" id="GO:0009252">
    <property type="term" value="P:peptidoglycan biosynthetic process"/>
    <property type="evidence" value="ECO:0007669"/>
    <property type="project" value="UniProtKB-UniRule"/>
</dbReference>
<dbReference type="GO" id="GO:0008360">
    <property type="term" value="P:regulation of cell shape"/>
    <property type="evidence" value="ECO:0007669"/>
    <property type="project" value="UniProtKB-KW"/>
</dbReference>
<dbReference type="FunFam" id="3.90.190.20:FF:000006">
    <property type="entry name" value="UDP-N-acetylmuramoyl-L-alanyl-D-glutamate--2,6-diaminopimelate ligase"/>
    <property type="match status" value="1"/>
</dbReference>
<dbReference type="Gene3D" id="3.90.190.20">
    <property type="entry name" value="Mur ligase, C-terminal domain"/>
    <property type="match status" value="1"/>
</dbReference>
<dbReference type="Gene3D" id="3.40.1190.10">
    <property type="entry name" value="Mur-like, catalytic domain"/>
    <property type="match status" value="1"/>
</dbReference>
<dbReference type="Gene3D" id="3.40.1390.10">
    <property type="entry name" value="MurE/MurF, N-terminal domain"/>
    <property type="match status" value="1"/>
</dbReference>
<dbReference type="HAMAP" id="MF_00208">
    <property type="entry name" value="MurE"/>
    <property type="match status" value="1"/>
</dbReference>
<dbReference type="InterPro" id="IPR036565">
    <property type="entry name" value="Mur-like_cat_sf"/>
</dbReference>
<dbReference type="InterPro" id="IPR004101">
    <property type="entry name" value="Mur_ligase_C"/>
</dbReference>
<dbReference type="InterPro" id="IPR036615">
    <property type="entry name" value="Mur_ligase_C_dom_sf"/>
</dbReference>
<dbReference type="InterPro" id="IPR013221">
    <property type="entry name" value="Mur_ligase_cen"/>
</dbReference>
<dbReference type="InterPro" id="IPR000713">
    <property type="entry name" value="Mur_ligase_N"/>
</dbReference>
<dbReference type="InterPro" id="IPR035911">
    <property type="entry name" value="MurE/MurF_N"/>
</dbReference>
<dbReference type="InterPro" id="IPR005761">
    <property type="entry name" value="UDP-N-AcMur-Glu-dNH2Pim_ligase"/>
</dbReference>
<dbReference type="NCBIfam" id="TIGR01085">
    <property type="entry name" value="murE"/>
    <property type="match status" value="1"/>
</dbReference>
<dbReference type="NCBIfam" id="NF001126">
    <property type="entry name" value="PRK00139.1-4"/>
    <property type="match status" value="1"/>
</dbReference>
<dbReference type="PANTHER" id="PTHR23135">
    <property type="entry name" value="MUR LIGASE FAMILY MEMBER"/>
    <property type="match status" value="1"/>
</dbReference>
<dbReference type="PANTHER" id="PTHR23135:SF4">
    <property type="entry name" value="UDP-N-ACETYLMURAMOYL-L-ALANYL-D-GLUTAMATE--2,6-DIAMINOPIMELATE LIGASE MURE HOMOLOG, CHLOROPLASTIC"/>
    <property type="match status" value="1"/>
</dbReference>
<dbReference type="Pfam" id="PF01225">
    <property type="entry name" value="Mur_ligase"/>
    <property type="match status" value="1"/>
</dbReference>
<dbReference type="Pfam" id="PF02875">
    <property type="entry name" value="Mur_ligase_C"/>
    <property type="match status" value="1"/>
</dbReference>
<dbReference type="Pfam" id="PF08245">
    <property type="entry name" value="Mur_ligase_M"/>
    <property type="match status" value="1"/>
</dbReference>
<dbReference type="SUPFAM" id="SSF53623">
    <property type="entry name" value="MurD-like peptide ligases, catalytic domain"/>
    <property type="match status" value="1"/>
</dbReference>
<dbReference type="SUPFAM" id="SSF53244">
    <property type="entry name" value="MurD-like peptide ligases, peptide-binding domain"/>
    <property type="match status" value="1"/>
</dbReference>
<dbReference type="SUPFAM" id="SSF63418">
    <property type="entry name" value="MurE/MurF N-terminal domain"/>
    <property type="match status" value="1"/>
</dbReference>